<evidence type="ECO:0000255" key="1"/>
<evidence type="ECO:0000255" key="2">
    <source>
        <dbReference type="PROSITE-ProRule" id="PRU00285"/>
    </source>
</evidence>
<evidence type="ECO:0000269" key="3">
    <source>
    </source>
</evidence>
<evidence type="ECO:0000305" key="4">
    <source>
    </source>
</evidence>
<keyword id="KW-0256">Endoplasmic reticulum</keyword>
<keyword id="KW-0325">Glycoprotein</keyword>
<keyword id="KW-1185">Reference proteome</keyword>
<keyword id="KW-0732">Signal</keyword>
<keyword id="KW-0346">Stress response</keyword>
<accession>Q38806</accession>
<name>HSP22_ARATH</name>
<dbReference type="EMBL" id="U11501">
    <property type="protein sequence ID" value="AAA19931.1"/>
    <property type="molecule type" value="mRNA"/>
</dbReference>
<dbReference type="EMBL" id="AF096373">
    <property type="protein sequence ID" value="AAC62802.1"/>
    <property type="molecule type" value="Genomic_DNA"/>
</dbReference>
<dbReference type="EMBL" id="AL049488">
    <property type="protein sequence ID" value="CAB39778.1"/>
    <property type="molecule type" value="Genomic_DNA"/>
</dbReference>
<dbReference type="EMBL" id="AL161516">
    <property type="protein sequence ID" value="CAB78148.1"/>
    <property type="molecule type" value="Genomic_DNA"/>
</dbReference>
<dbReference type="EMBL" id="CP002687">
    <property type="protein sequence ID" value="AEE82859.1"/>
    <property type="molecule type" value="Genomic_DNA"/>
</dbReference>
<dbReference type="EMBL" id="BT004802">
    <property type="protein sequence ID" value="AAO44068.1"/>
    <property type="molecule type" value="mRNA"/>
</dbReference>
<dbReference type="EMBL" id="AK227769">
    <property type="protein sequence ID" value="BAE99751.1"/>
    <property type="molecule type" value="mRNA"/>
</dbReference>
<dbReference type="PIR" id="S71188">
    <property type="entry name" value="S71188"/>
</dbReference>
<dbReference type="RefSeq" id="NP_192763.1">
    <property type="nucleotide sequence ID" value="NM_117093.4"/>
</dbReference>
<dbReference type="SMR" id="Q38806"/>
<dbReference type="BioGRID" id="11915">
    <property type="interactions" value="2"/>
</dbReference>
<dbReference type="FunCoup" id="Q38806">
    <property type="interactions" value="209"/>
</dbReference>
<dbReference type="STRING" id="3702.Q38806"/>
<dbReference type="GlyCosmos" id="Q38806">
    <property type="glycosylation" value="1 site, No reported glycans"/>
</dbReference>
<dbReference type="GlyGen" id="Q38806">
    <property type="glycosylation" value="1 site"/>
</dbReference>
<dbReference type="PaxDb" id="3702-AT4G10250.1"/>
<dbReference type="ProteomicsDB" id="232134"/>
<dbReference type="EnsemblPlants" id="AT4G10250.1">
    <property type="protein sequence ID" value="AT4G10250.1"/>
    <property type="gene ID" value="AT4G10250"/>
</dbReference>
<dbReference type="GeneID" id="826616"/>
<dbReference type="Gramene" id="AT4G10250.1">
    <property type="protein sequence ID" value="AT4G10250.1"/>
    <property type="gene ID" value="AT4G10250"/>
</dbReference>
<dbReference type="KEGG" id="ath:AT4G10250"/>
<dbReference type="Araport" id="AT4G10250"/>
<dbReference type="TAIR" id="AT4G10250">
    <property type="gene designation" value="ATHSP22.0"/>
</dbReference>
<dbReference type="eggNOG" id="KOG0710">
    <property type="taxonomic scope" value="Eukaryota"/>
</dbReference>
<dbReference type="HOGENOM" id="CLU_046737_5_3_1"/>
<dbReference type="InParanoid" id="Q38806"/>
<dbReference type="OMA" id="EMASIMS"/>
<dbReference type="PhylomeDB" id="Q38806"/>
<dbReference type="PRO" id="PR:Q38806"/>
<dbReference type="Proteomes" id="UP000006548">
    <property type="component" value="Chromosome 4"/>
</dbReference>
<dbReference type="ExpressionAtlas" id="Q38806">
    <property type="expression patterns" value="baseline and differential"/>
</dbReference>
<dbReference type="GO" id="GO:0005783">
    <property type="term" value="C:endoplasmic reticulum"/>
    <property type="evidence" value="ECO:0000314"/>
    <property type="project" value="UniProtKB"/>
</dbReference>
<dbReference type="GO" id="GO:0071456">
    <property type="term" value="P:cellular response to hypoxia"/>
    <property type="evidence" value="ECO:0007007"/>
    <property type="project" value="TAIR"/>
</dbReference>
<dbReference type="GO" id="GO:0009408">
    <property type="term" value="P:response to heat"/>
    <property type="evidence" value="ECO:0000270"/>
    <property type="project" value="UniProtKB"/>
</dbReference>
<dbReference type="CDD" id="cd06472">
    <property type="entry name" value="ACD_ScHsp26_like"/>
    <property type="match status" value="1"/>
</dbReference>
<dbReference type="FunFam" id="2.60.40.790:FF:000035">
    <property type="entry name" value="22.0 kDa heat shock protein"/>
    <property type="match status" value="1"/>
</dbReference>
<dbReference type="Gene3D" id="2.60.40.790">
    <property type="match status" value="1"/>
</dbReference>
<dbReference type="InterPro" id="IPR002068">
    <property type="entry name" value="A-crystallin/Hsp20_dom"/>
</dbReference>
<dbReference type="InterPro" id="IPR007052">
    <property type="entry name" value="CS_dom"/>
</dbReference>
<dbReference type="InterPro" id="IPR008978">
    <property type="entry name" value="HSP20-like_chaperone"/>
</dbReference>
<dbReference type="InterPro" id="IPR031107">
    <property type="entry name" value="Small_HSP"/>
</dbReference>
<dbReference type="PANTHER" id="PTHR11527">
    <property type="entry name" value="HEAT-SHOCK PROTEIN 20 FAMILY MEMBER"/>
    <property type="match status" value="1"/>
</dbReference>
<dbReference type="Pfam" id="PF00011">
    <property type="entry name" value="HSP20"/>
    <property type="match status" value="1"/>
</dbReference>
<dbReference type="SUPFAM" id="SSF49764">
    <property type="entry name" value="HSP20-like chaperones"/>
    <property type="match status" value="1"/>
</dbReference>
<dbReference type="PROSITE" id="PS01031">
    <property type="entry name" value="SHSP"/>
    <property type="match status" value="1"/>
</dbReference>
<reference key="1">
    <citation type="journal article" date="1995" name="Plant Physiol.">
        <title>An endomembrane-localized small heat-shock protein from Arabidopsis thaliana.</title>
        <authorList>
            <person name="Helm K.W."/>
            <person name="Schmeits J."/>
            <person name="Vierling E."/>
        </authorList>
    </citation>
    <scope>NUCLEOTIDE SEQUENCE [MRNA]</scope>
    <scope>SUBCELLULAR LOCATION</scope>
    <scope>INDUCTION</scope>
    <source>
        <strain>cv. Columbia</strain>
    </source>
</reference>
<reference key="2">
    <citation type="journal article" date="1999" name="Nature">
        <title>Sequence and analysis of chromosome 4 of the plant Arabidopsis thaliana.</title>
        <authorList>
            <person name="Mayer K.F.X."/>
            <person name="Schueller C."/>
            <person name="Wambutt R."/>
            <person name="Murphy G."/>
            <person name="Volckaert G."/>
            <person name="Pohl T."/>
            <person name="Duesterhoeft A."/>
            <person name="Stiekema W."/>
            <person name="Entian K.-D."/>
            <person name="Terryn N."/>
            <person name="Harris B."/>
            <person name="Ansorge W."/>
            <person name="Brandt P."/>
            <person name="Grivell L.A."/>
            <person name="Rieger M."/>
            <person name="Weichselgartner M."/>
            <person name="de Simone V."/>
            <person name="Obermaier B."/>
            <person name="Mache R."/>
            <person name="Mueller M."/>
            <person name="Kreis M."/>
            <person name="Delseny M."/>
            <person name="Puigdomenech P."/>
            <person name="Watson M."/>
            <person name="Schmidtheini T."/>
            <person name="Reichert B."/>
            <person name="Portetelle D."/>
            <person name="Perez-Alonso M."/>
            <person name="Boutry M."/>
            <person name="Bancroft I."/>
            <person name="Vos P."/>
            <person name="Hoheisel J."/>
            <person name="Zimmermann W."/>
            <person name="Wedler H."/>
            <person name="Ridley P."/>
            <person name="Langham S.-A."/>
            <person name="McCullagh B."/>
            <person name="Bilham L."/>
            <person name="Robben J."/>
            <person name="van der Schueren J."/>
            <person name="Grymonprez B."/>
            <person name="Chuang Y.-J."/>
            <person name="Vandenbussche F."/>
            <person name="Braeken M."/>
            <person name="Weltjens I."/>
            <person name="Voet M."/>
            <person name="Bastiaens I."/>
            <person name="Aert R."/>
            <person name="Defoor E."/>
            <person name="Weitzenegger T."/>
            <person name="Bothe G."/>
            <person name="Ramsperger U."/>
            <person name="Hilbert H."/>
            <person name="Braun M."/>
            <person name="Holzer E."/>
            <person name="Brandt A."/>
            <person name="Peters S."/>
            <person name="van Staveren M."/>
            <person name="Dirkse W."/>
            <person name="Mooijman P."/>
            <person name="Klein Lankhorst R."/>
            <person name="Rose M."/>
            <person name="Hauf J."/>
            <person name="Koetter P."/>
            <person name="Berneiser S."/>
            <person name="Hempel S."/>
            <person name="Feldpausch M."/>
            <person name="Lamberth S."/>
            <person name="Van den Daele H."/>
            <person name="De Keyser A."/>
            <person name="Buysshaert C."/>
            <person name="Gielen J."/>
            <person name="Villarroel R."/>
            <person name="De Clercq R."/>
            <person name="van Montagu M."/>
            <person name="Rogers J."/>
            <person name="Cronin A."/>
            <person name="Quail M.A."/>
            <person name="Bray-Allen S."/>
            <person name="Clark L."/>
            <person name="Doggett J."/>
            <person name="Hall S."/>
            <person name="Kay M."/>
            <person name="Lennard N."/>
            <person name="McLay K."/>
            <person name="Mayes R."/>
            <person name="Pettett A."/>
            <person name="Rajandream M.A."/>
            <person name="Lyne M."/>
            <person name="Benes V."/>
            <person name="Rechmann S."/>
            <person name="Borkova D."/>
            <person name="Bloecker H."/>
            <person name="Scharfe M."/>
            <person name="Grimm M."/>
            <person name="Loehnert T.-H."/>
            <person name="Dose S."/>
            <person name="de Haan M."/>
            <person name="Maarse A.C."/>
            <person name="Schaefer M."/>
            <person name="Mueller-Auer S."/>
            <person name="Gabel C."/>
            <person name="Fuchs M."/>
            <person name="Fartmann B."/>
            <person name="Granderath K."/>
            <person name="Dauner D."/>
            <person name="Herzl A."/>
            <person name="Neumann S."/>
            <person name="Argiriou A."/>
            <person name="Vitale D."/>
            <person name="Liguori R."/>
            <person name="Piravandi E."/>
            <person name="Massenet O."/>
            <person name="Quigley F."/>
            <person name="Clabauld G."/>
            <person name="Muendlein A."/>
            <person name="Felber R."/>
            <person name="Schnabl S."/>
            <person name="Hiller R."/>
            <person name="Schmidt W."/>
            <person name="Lecharny A."/>
            <person name="Aubourg S."/>
            <person name="Chefdor F."/>
            <person name="Cooke R."/>
            <person name="Berger C."/>
            <person name="Monfort A."/>
            <person name="Casacuberta E."/>
            <person name="Gibbons T."/>
            <person name="Weber N."/>
            <person name="Vandenbol M."/>
            <person name="Bargues M."/>
            <person name="Terol J."/>
            <person name="Torres A."/>
            <person name="Perez-Perez A."/>
            <person name="Purnelle B."/>
            <person name="Bent E."/>
            <person name="Johnson S."/>
            <person name="Tacon D."/>
            <person name="Jesse T."/>
            <person name="Heijnen L."/>
            <person name="Schwarz S."/>
            <person name="Scholler P."/>
            <person name="Heber S."/>
            <person name="Francs P."/>
            <person name="Bielke C."/>
            <person name="Frishman D."/>
            <person name="Haase D."/>
            <person name="Lemcke K."/>
            <person name="Mewes H.-W."/>
            <person name="Stocker S."/>
            <person name="Zaccaria P."/>
            <person name="Bevan M."/>
            <person name="Wilson R.K."/>
            <person name="de la Bastide M."/>
            <person name="Habermann K."/>
            <person name="Parnell L."/>
            <person name="Dedhia N."/>
            <person name="Gnoj L."/>
            <person name="Schutz K."/>
            <person name="Huang E."/>
            <person name="Spiegel L."/>
            <person name="Sekhon M."/>
            <person name="Murray J."/>
            <person name="Sheet P."/>
            <person name="Cordes M."/>
            <person name="Abu-Threideh J."/>
            <person name="Stoneking T."/>
            <person name="Kalicki J."/>
            <person name="Graves T."/>
            <person name="Harmon G."/>
            <person name="Edwards J."/>
            <person name="Latreille P."/>
            <person name="Courtney L."/>
            <person name="Cloud J."/>
            <person name="Abbott A."/>
            <person name="Scott K."/>
            <person name="Johnson D."/>
            <person name="Minx P."/>
            <person name="Bentley D."/>
            <person name="Fulton B."/>
            <person name="Miller N."/>
            <person name="Greco T."/>
            <person name="Kemp K."/>
            <person name="Kramer J."/>
            <person name="Fulton L."/>
            <person name="Mardis E."/>
            <person name="Dante M."/>
            <person name="Pepin K."/>
            <person name="Hillier L.W."/>
            <person name="Nelson J."/>
            <person name="Spieth J."/>
            <person name="Ryan E."/>
            <person name="Andrews S."/>
            <person name="Geisel C."/>
            <person name="Layman D."/>
            <person name="Du H."/>
            <person name="Ali J."/>
            <person name="Berghoff A."/>
            <person name="Jones K."/>
            <person name="Drone K."/>
            <person name="Cotton M."/>
            <person name="Joshu C."/>
            <person name="Antonoiu B."/>
            <person name="Zidanic M."/>
            <person name="Strong C."/>
            <person name="Sun H."/>
            <person name="Lamar B."/>
            <person name="Yordan C."/>
            <person name="Ma P."/>
            <person name="Zhong J."/>
            <person name="Preston R."/>
            <person name="Vil D."/>
            <person name="Shekher M."/>
            <person name="Matero A."/>
            <person name="Shah R."/>
            <person name="Swaby I.K."/>
            <person name="O'Shaughnessy A."/>
            <person name="Rodriguez M."/>
            <person name="Hoffman J."/>
            <person name="Till S."/>
            <person name="Granat S."/>
            <person name="Shohdy N."/>
            <person name="Hasegawa A."/>
            <person name="Hameed A."/>
            <person name="Lodhi M."/>
            <person name="Johnson A."/>
            <person name="Chen E."/>
            <person name="Marra M.A."/>
            <person name="Martienssen R."/>
            <person name="McCombie W.R."/>
        </authorList>
    </citation>
    <scope>NUCLEOTIDE SEQUENCE [LARGE SCALE GENOMIC DNA]</scope>
    <source>
        <strain>cv. Columbia</strain>
    </source>
</reference>
<reference key="3">
    <citation type="journal article" date="2017" name="Plant J.">
        <title>Araport11: a complete reannotation of the Arabidopsis thaliana reference genome.</title>
        <authorList>
            <person name="Cheng C.Y."/>
            <person name="Krishnakumar V."/>
            <person name="Chan A.P."/>
            <person name="Thibaud-Nissen F."/>
            <person name="Schobel S."/>
            <person name="Town C.D."/>
        </authorList>
    </citation>
    <scope>GENOME REANNOTATION</scope>
    <source>
        <strain>cv. Columbia</strain>
    </source>
</reference>
<reference key="4">
    <citation type="journal article" date="2003" name="Science">
        <title>Empirical analysis of transcriptional activity in the Arabidopsis genome.</title>
        <authorList>
            <person name="Yamada K."/>
            <person name="Lim J."/>
            <person name="Dale J.M."/>
            <person name="Chen H."/>
            <person name="Shinn P."/>
            <person name="Palm C.J."/>
            <person name="Southwick A.M."/>
            <person name="Wu H.C."/>
            <person name="Kim C.J."/>
            <person name="Nguyen M."/>
            <person name="Pham P.K."/>
            <person name="Cheuk R.F."/>
            <person name="Karlin-Newmann G."/>
            <person name="Liu S.X."/>
            <person name="Lam B."/>
            <person name="Sakano H."/>
            <person name="Wu T."/>
            <person name="Yu G."/>
            <person name="Miranda M."/>
            <person name="Quach H.L."/>
            <person name="Tripp M."/>
            <person name="Chang C.H."/>
            <person name="Lee J.M."/>
            <person name="Toriumi M.J."/>
            <person name="Chan M.M."/>
            <person name="Tang C.C."/>
            <person name="Onodera C.S."/>
            <person name="Deng J.M."/>
            <person name="Akiyama K."/>
            <person name="Ansari Y."/>
            <person name="Arakawa T."/>
            <person name="Banh J."/>
            <person name="Banno F."/>
            <person name="Bowser L."/>
            <person name="Brooks S.Y."/>
            <person name="Carninci P."/>
            <person name="Chao Q."/>
            <person name="Choy N."/>
            <person name="Enju A."/>
            <person name="Goldsmith A.D."/>
            <person name="Gurjal M."/>
            <person name="Hansen N.F."/>
            <person name="Hayashizaki Y."/>
            <person name="Johnson-Hopson C."/>
            <person name="Hsuan V.W."/>
            <person name="Iida K."/>
            <person name="Karnes M."/>
            <person name="Khan S."/>
            <person name="Koesema E."/>
            <person name="Ishida J."/>
            <person name="Jiang P.X."/>
            <person name="Jones T."/>
            <person name="Kawai J."/>
            <person name="Kamiya A."/>
            <person name="Meyers C."/>
            <person name="Nakajima M."/>
            <person name="Narusaka M."/>
            <person name="Seki M."/>
            <person name="Sakurai T."/>
            <person name="Satou M."/>
            <person name="Tamse R."/>
            <person name="Vaysberg M."/>
            <person name="Wallender E.K."/>
            <person name="Wong C."/>
            <person name="Yamamura Y."/>
            <person name="Yuan S."/>
            <person name="Shinozaki K."/>
            <person name="Davis R.W."/>
            <person name="Theologis A."/>
            <person name="Ecker J.R."/>
        </authorList>
    </citation>
    <scope>NUCLEOTIDE SEQUENCE [LARGE SCALE MRNA]</scope>
    <source>
        <strain>cv. Columbia</strain>
    </source>
</reference>
<reference key="5">
    <citation type="submission" date="2006-07" db="EMBL/GenBank/DDBJ databases">
        <title>Large-scale analysis of RIKEN Arabidopsis full-length (RAFL) cDNAs.</title>
        <authorList>
            <person name="Totoki Y."/>
            <person name="Seki M."/>
            <person name="Ishida J."/>
            <person name="Nakajima M."/>
            <person name="Enju A."/>
            <person name="Kamiya A."/>
            <person name="Narusaka M."/>
            <person name="Shin-i T."/>
            <person name="Nakagawa M."/>
            <person name="Sakamoto N."/>
            <person name="Oishi K."/>
            <person name="Kohara Y."/>
            <person name="Kobayashi M."/>
            <person name="Toyoda A."/>
            <person name="Sakaki Y."/>
            <person name="Sakurai T."/>
            <person name="Iida K."/>
            <person name="Akiyama K."/>
            <person name="Satou M."/>
            <person name="Toyoda T."/>
            <person name="Konagaya A."/>
            <person name="Carninci P."/>
            <person name="Kawai J."/>
            <person name="Hayashizaki Y."/>
            <person name="Shinozaki K."/>
        </authorList>
    </citation>
    <scope>NUCLEOTIDE SEQUENCE [LARGE SCALE MRNA]</scope>
    <source>
        <strain>cv. Columbia</strain>
    </source>
</reference>
<gene>
    <name type="primary">HSP22.0</name>
    <name type="ordered locus">At4g10250</name>
    <name type="ORF">F24G24.50</name>
    <name type="ORF">T9A4.7</name>
</gene>
<organism>
    <name type="scientific">Arabidopsis thaliana</name>
    <name type="common">Mouse-ear cress</name>
    <dbReference type="NCBI Taxonomy" id="3702"/>
    <lineage>
        <taxon>Eukaryota</taxon>
        <taxon>Viridiplantae</taxon>
        <taxon>Streptophyta</taxon>
        <taxon>Embryophyta</taxon>
        <taxon>Tracheophyta</taxon>
        <taxon>Spermatophyta</taxon>
        <taxon>Magnoliopsida</taxon>
        <taxon>eudicotyledons</taxon>
        <taxon>Gunneridae</taxon>
        <taxon>Pentapetalae</taxon>
        <taxon>rosids</taxon>
        <taxon>malvids</taxon>
        <taxon>Brassicales</taxon>
        <taxon>Brassicaceae</taxon>
        <taxon>Camelineae</taxon>
        <taxon>Arabidopsis</taxon>
    </lineage>
</organism>
<sequence length="195" mass="21997">MMKHLLSIFFIGALLLGNIKTSEGSLSSALETTPGSLLSDLWLDRFPDPFKILERIPLGLERDTSVALSPARVDWKETAEGHEIMLDIPGLKKDEVKIEVEENGVLRVSGERKREEEKKGDQWHRVERSYGKFWRQFKLPDNVDMESVKAKLENGVLTINLTKLSPEKVKGPRVVNIAAEEDQTAKISSSESKEL</sequence>
<protein>
    <recommendedName>
        <fullName>22.0 kDa heat shock protein</fullName>
        <shortName>AtHsp22.0</shortName>
    </recommendedName>
</protein>
<feature type="signal peptide" evidence="1">
    <location>
        <begin position="1"/>
        <end position="21"/>
    </location>
</feature>
<feature type="chain" id="PRO_5000144246" description="22.0 kDa heat shock protein">
    <location>
        <begin position="22"/>
        <end position="195"/>
    </location>
</feature>
<feature type="domain" description="sHSP" evidence="2">
    <location>
        <begin position="62"/>
        <end position="180"/>
    </location>
</feature>
<feature type="glycosylation site" description="N-linked (GlcNAc...) asparagine" evidence="1">
    <location>
        <position position="160"/>
    </location>
</feature>
<proteinExistence type="evidence at transcript level"/>
<comment type="subunit">
    <text>May form oligomeric structures.</text>
</comment>
<comment type="subcellular location">
    <subcellularLocation>
        <location evidence="4">Endoplasmic reticulum</location>
    </subcellularLocation>
</comment>
<comment type="induction">
    <text evidence="3">By heat shock.</text>
</comment>
<comment type="similarity">
    <text evidence="2">Belongs to the small heat shock protein (HSP20) family.</text>
</comment>